<keyword id="KW-0687">Ribonucleoprotein</keyword>
<keyword id="KW-0689">Ribosomal protein</keyword>
<gene>
    <name evidence="1" type="primary">rpmA</name>
    <name type="ordered locus">BAbS19_I17370</name>
</gene>
<sequence length="89" mass="9377">MAHKKAGGSSRNGRDSESKRLGVKKFGGEAVLAGNIIVRQRGTKWHPGANVGLGKDHTIFATVNGSVSFRTKANGRTYVSVNPIAEAAE</sequence>
<reference key="1">
    <citation type="journal article" date="2008" name="PLoS ONE">
        <title>Genome sequence of Brucella abortus vaccine strain S19 compared to virulent strains yields candidate virulence genes.</title>
        <authorList>
            <person name="Crasta O.R."/>
            <person name="Folkerts O."/>
            <person name="Fei Z."/>
            <person name="Mane S.P."/>
            <person name="Evans C."/>
            <person name="Martino-Catt S."/>
            <person name="Bricker B."/>
            <person name="Yu G."/>
            <person name="Du L."/>
            <person name="Sobral B.W."/>
        </authorList>
    </citation>
    <scope>NUCLEOTIDE SEQUENCE [LARGE SCALE GENOMIC DNA]</scope>
    <source>
        <strain>S19</strain>
    </source>
</reference>
<evidence type="ECO:0000255" key="1">
    <source>
        <dbReference type="HAMAP-Rule" id="MF_00539"/>
    </source>
</evidence>
<evidence type="ECO:0000256" key="2">
    <source>
        <dbReference type="SAM" id="MobiDB-lite"/>
    </source>
</evidence>
<evidence type="ECO:0000305" key="3"/>
<name>RL27_BRUA1</name>
<feature type="chain" id="PRO_1000128703" description="Large ribosomal subunit protein bL27">
    <location>
        <begin position="1"/>
        <end position="89"/>
    </location>
</feature>
<feature type="region of interest" description="Disordered" evidence="2">
    <location>
        <begin position="1"/>
        <end position="22"/>
    </location>
</feature>
<protein>
    <recommendedName>
        <fullName evidence="1">Large ribosomal subunit protein bL27</fullName>
    </recommendedName>
    <alternativeName>
        <fullName evidence="3">50S ribosomal protein L27</fullName>
    </alternativeName>
</protein>
<dbReference type="EMBL" id="CP000887">
    <property type="protein sequence ID" value="ACD73219.1"/>
    <property type="molecule type" value="Genomic_DNA"/>
</dbReference>
<dbReference type="RefSeq" id="WP_002964927.1">
    <property type="nucleotide sequence ID" value="NC_010742.1"/>
</dbReference>
<dbReference type="SMR" id="B2S810"/>
<dbReference type="GeneID" id="93017814"/>
<dbReference type="KEGG" id="bmc:BAbS19_I17370"/>
<dbReference type="HOGENOM" id="CLU_095424_4_1_5"/>
<dbReference type="Proteomes" id="UP000002565">
    <property type="component" value="Chromosome 1"/>
</dbReference>
<dbReference type="GO" id="GO:0022625">
    <property type="term" value="C:cytosolic large ribosomal subunit"/>
    <property type="evidence" value="ECO:0007669"/>
    <property type="project" value="TreeGrafter"/>
</dbReference>
<dbReference type="GO" id="GO:0003735">
    <property type="term" value="F:structural constituent of ribosome"/>
    <property type="evidence" value="ECO:0007669"/>
    <property type="project" value="InterPro"/>
</dbReference>
<dbReference type="GO" id="GO:0006412">
    <property type="term" value="P:translation"/>
    <property type="evidence" value="ECO:0007669"/>
    <property type="project" value="UniProtKB-UniRule"/>
</dbReference>
<dbReference type="FunFam" id="2.40.50.100:FF:000020">
    <property type="entry name" value="50S ribosomal protein L27"/>
    <property type="match status" value="1"/>
</dbReference>
<dbReference type="Gene3D" id="2.40.50.100">
    <property type="match status" value="1"/>
</dbReference>
<dbReference type="HAMAP" id="MF_00539">
    <property type="entry name" value="Ribosomal_bL27"/>
    <property type="match status" value="1"/>
</dbReference>
<dbReference type="InterPro" id="IPR001684">
    <property type="entry name" value="Ribosomal_bL27"/>
</dbReference>
<dbReference type="InterPro" id="IPR018261">
    <property type="entry name" value="Ribosomal_bL27_CS"/>
</dbReference>
<dbReference type="NCBIfam" id="TIGR00062">
    <property type="entry name" value="L27"/>
    <property type="match status" value="1"/>
</dbReference>
<dbReference type="PANTHER" id="PTHR15893:SF0">
    <property type="entry name" value="LARGE RIBOSOMAL SUBUNIT PROTEIN BL27M"/>
    <property type="match status" value="1"/>
</dbReference>
<dbReference type="PANTHER" id="PTHR15893">
    <property type="entry name" value="RIBOSOMAL PROTEIN L27"/>
    <property type="match status" value="1"/>
</dbReference>
<dbReference type="Pfam" id="PF01016">
    <property type="entry name" value="Ribosomal_L27"/>
    <property type="match status" value="1"/>
</dbReference>
<dbReference type="PRINTS" id="PR00063">
    <property type="entry name" value="RIBOSOMALL27"/>
</dbReference>
<dbReference type="SUPFAM" id="SSF110324">
    <property type="entry name" value="Ribosomal L27 protein-like"/>
    <property type="match status" value="1"/>
</dbReference>
<dbReference type="PROSITE" id="PS00831">
    <property type="entry name" value="RIBOSOMAL_L27"/>
    <property type="match status" value="1"/>
</dbReference>
<organism>
    <name type="scientific">Brucella abortus (strain S19)</name>
    <dbReference type="NCBI Taxonomy" id="430066"/>
    <lineage>
        <taxon>Bacteria</taxon>
        <taxon>Pseudomonadati</taxon>
        <taxon>Pseudomonadota</taxon>
        <taxon>Alphaproteobacteria</taxon>
        <taxon>Hyphomicrobiales</taxon>
        <taxon>Brucellaceae</taxon>
        <taxon>Brucella/Ochrobactrum group</taxon>
        <taxon>Brucella</taxon>
    </lineage>
</organism>
<comment type="similarity">
    <text evidence="1">Belongs to the bacterial ribosomal protein bL27 family.</text>
</comment>
<accession>B2S810</accession>
<proteinExistence type="inferred from homology"/>